<gene>
    <name evidence="7" type="primary">Nek7</name>
</gene>
<keyword id="KW-0007">Acetylation</keyword>
<keyword id="KW-0067">ATP-binding</keyword>
<keyword id="KW-0963">Cytoplasm</keyword>
<keyword id="KW-0206">Cytoskeleton</keyword>
<keyword id="KW-0418">Kinase</keyword>
<keyword id="KW-0460">Magnesium</keyword>
<keyword id="KW-0479">Metal-binding</keyword>
<keyword id="KW-0547">Nucleotide-binding</keyword>
<keyword id="KW-0539">Nucleus</keyword>
<keyword id="KW-0597">Phosphoprotein</keyword>
<keyword id="KW-1185">Reference proteome</keyword>
<keyword id="KW-0723">Serine/threonine-protein kinase</keyword>
<keyword id="KW-0808">Transferase</keyword>
<accession>D3ZBE5</accession>
<protein>
    <recommendedName>
        <fullName evidence="9">Serine/threonine-protein kinase Nek7</fullName>
        <ecNumber evidence="6">2.7.11.34</ecNumber>
    </recommendedName>
    <alternativeName>
        <fullName evidence="7">Never in mitosis A-related kinase 7</fullName>
        <shortName evidence="7">NimA-related protein kinase 7</shortName>
    </alternativeName>
</protein>
<name>NEK7_RAT</name>
<dbReference type="EC" id="2.7.11.34" evidence="6"/>
<dbReference type="EMBL" id="CH473958">
    <property type="protein sequence ID" value="EDM09639.1"/>
    <property type="molecule type" value="Genomic_DNA"/>
</dbReference>
<dbReference type="RefSeq" id="NP_001101816.1">
    <property type="nucleotide sequence ID" value="NM_001108346.3"/>
</dbReference>
<dbReference type="RefSeq" id="XP_006249988.1">
    <property type="nucleotide sequence ID" value="XM_006249926.3"/>
</dbReference>
<dbReference type="RefSeq" id="XP_063128539.1">
    <property type="nucleotide sequence ID" value="XM_063272469.1"/>
</dbReference>
<dbReference type="SMR" id="D3ZBE5"/>
<dbReference type="BioGRID" id="262254">
    <property type="interactions" value="1"/>
</dbReference>
<dbReference type="FunCoup" id="D3ZBE5">
    <property type="interactions" value="1501"/>
</dbReference>
<dbReference type="IntAct" id="D3ZBE5">
    <property type="interactions" value="4"/>
</dbReference>
<dbReference type="STRING" id="10116.ENSRNOP00000069169"/>
<dbReference type="iPTMnet" id="D3ZBE5"/>
<dbReference type="PhosphoSitePlus" id="D3ZBE5"/>
<dbReference type="jPOST" id="D3ZBE5"/>
<dbReference type="PaxDb" id="10116-ENSRNOP00000000817"/>
<dbReference type="PeptideAtlas" id="D3ZBE5"/>
<dbReference type="Ensembl" id="ENSRNOT00000000817.7">
    <property type="protein sequence ID" value="ENSRNOP00000000817.4"/>
    <property type="gene ID" value="ENSRNOG00000000657.8"/>
</dbReference>
<dbReference type="GeneID" id="360850"/>
<dbReference type="KEGG" id="rno:360850"/>
<dbReference type="UCSC" id="RGD:1311160">
    <property type="organism name" value="rat"/>
</dbReference>
<dbReference type="AGR" id="RGD:1311160"/>
<dbReference type="CTD" id="140609"/>
<dbReference type="RGD" id="1311160">
    <property type="gene designation" value="Nek7"/>
</dbReference>
<dbReference type="eggNOG" id="KOG0591">
    <property type="taxonomic scope" value="Eukaryota"/>
</dbReference>
<dbReference type="GeneTree" id="ENSGT00940000156725"/>
<dbReference type="HOGENOM" id="CLU_000288_63_23_1"/>
<dbReference type="InParanoid" id="D3ZBE5"/>
<dbReference type="PhylomeDB" id="D3ZBE5"/>
<dbReference type="TreeFam" id="TF105135"/>
<dbReference type="PRO" id="PR:D3ZBE5"/>
<dbReference type="Proteomes" id="UP000002494">
    <property type="component" value="Chromosome 13"/>
</dbReference>
<dbReference type="Proteomes" id="UP000234681">
    <property type="component" value="Chromosome 13"/>
</dbReference>
<dbReference type="Bgee" id="ENSRNOG00000000657">
    <property type="expression patterns" value="Expressed in quadriceps femoris and 18 other cell types or tissues"/>
</dbReference>
<dbReference type="ExpressionAtlas" id="D3ZBE5">
    <property type="expression patterns" value="baseline and differential"/>
</dbReference>
<dbReference type="GO" id="GO:0005813">
    <property type="term" value="C:centrosome"/>
    <property type="evidence" value="ECO:0007669"/>
    <property type="project" value="UniProtKB-SubCell"/>
</dbReference>
<dbReference type="GO" id="GO:0005737">
    <property type="term" value="C:cytoplasm"/>
    <property type="evidence" value="ECO:0000250"/>
    <property type="project" value="UniProtKB"/>
</dbReference>
<dbReference type="GO" id="GO:0005815">
    <property type="term" value="C:microtubule organizing center"/>
    <property type="evidence" value="ECO:0000266"/>
    <property type="project" value="RGD"/>
</dbReference>
<dbReference type="GO" id="GO:0005634">
    <property type="term" value="C:nucleus"/>
    <property type="evidence" value="ECO:0000250"/>
    <property type="project" value="UniProtKB"/>
</dbReference>
<dbReference type="GO" id="GO:0000922">
    <property type="term" value="C:spindle pole"/>
    <property type="evidence" value="ECO:0007669"/>
    <property type="project" value="UniProtKB-SubCell"/>
</dbReference>
<dbReference type="GO" id="GO:0005524">
    <property type="term" value="F:ATP binding"/>
    <property type="evidence" value="ECO:0007669"/>
    <property type="project" value="UniProtKB-KW"/>
</dbReference>
<dbReference type="GO" id="GO:0046872">
    <property type="term" value="F:metal ion binding"/>
    <property type="evidence" value="ECO:0007669"/>
    <property type="project" value="UniProtKB-KW"/>
</dbReference>
<dbReference type="GO" id="GO:0140677">
    <property type="term" value="F:molecular function activator activity"/>
    <property type="evidence" value="ECO:0000250"/>
    <property type="project" value="UniProtKB"/>
</dbReference>
<dbReference type="GO" id="GO:0106310">
    <property type="term" value="F:protein serine kinase activity"/>
    <property type="evidence" value="ECO:0007669"/>
    <property type="project" value="RHEA"/>
</dbReference>
<dbReference type="GO" id="GO:0004674">
    <property type="term" value="F:protein serine/threonine kinase activity"/>
    <property type="evidence" value="ECO:0000314"/>
    <property type="project" value="UniProtKB"/>
</dbReference>
<dbReference type="GO" id="GO:0035865">
    <property type="term" value="P:cellular response to potassium ion"/>
    <property type="evidence" value="ECO:0000250"/>
    <property type="project" value="UniProtKB"/>
</dbReference>
<dbReference type="GO" id="GO:1900227">
    <property type="term" value="P:positive regulation of NLRP3 inflammasome complex assembly"/>
    <property type="evidence" value="ECO:0000250"/>
    <property type="project" value="UniProtKB"/>
</dbReference>
<dbReference type="GO" id="GO:0032206">
    <property type="term" value="P:positive regulation of telomere maintenance"/>
    <property type="evidence" value="ECO:0000266"/>
    <property type="project" value="RGD"/>
</dbReference>
<dbReference type="GO" id="GO:0006468">
    <property type="term" value="P:protein phosphorylation"/>
    <property type="evidence" value="ECO:0000250"/>
    <property type="project" value="UniProtKB"/>
</dbReference>
<dbReference type="GO" id="GO:0007346">
    <property type="term" value="P:regulation of mitotic cell cycle"/>
    <property type="evidence" value="ECO:0000250"/>
    <property type="project" value="UniProtKB"/>
</dbReference>
<dbReference type="CDD" id="cd08224">
    <property type="entry name" value="STKc_Nek6_7"/>
    <property type="match status" value="1"/>
</dbReference>
<dbReference type="FunFam" id="1.10.510.10:FF:000148">
    <property type="entry name" value="Serine/threonine-protein kinase Nek7"/>
    <property type="match status" value="1"/>
</dbReference>
<dbReference type="FunFam" id="3.30.200.20:FF:000204">
    <property type="entry name" value="Serine/threonine-protein kinase Nek7"/>
    <property type="match status" value="1"/>
</dbReference>
<dbReference type="FunFam" id="3.30.200.20:FF:000240">
    <property type="entry name" value="Serine/threonine-protein kinase Nek7"/>
    <property type="match status" value="1"/>
</dbReference>
<dbReference type="Gene3D" id="3.30.200.20">
    <property type="entry name" value="Phosphorylase Kinase, domain 1"/>
    <property type="match status" value="2"/>
</dbReference>
<dbReference type="Gene3D" id="1.10.510.10">
    <property type="entry name" value="Transferase(Phosphotransferase) domain 1"/>
    <property type="match status" value="1"/>
</dbReference>
<dbReference type="InterPro" id="IPR011009">
    <property type="entry name" value="Kinase-like_dom_sf"/>
</dbReference>
<dbReference type="InterPro" id="IPR000719">
    <property type="entry name" value="Prot_kinase_dom"/>
</dbReference>
<dbReference type="InterPro" id="IPR017441">
    <property type="entry name" value="Protein_kinase_ATP_BS"/>
</dbReference>
<dbReference type="InterPro" id="IPR001245">
    <property type="entry name" value="Ser-Thr/Tyr_kinase_cat_dom"/>
</dbReference>
<dbReference type="InterPro" id="IPR008271">
    <property type="entry name" value="Ser/Thr_kinase_AS"/>
</dbReference>
<dbReference type="PANTHER" id="PTHR43289">
    <property type="entry name" value="MITOGEN-ACTIVATED PROTEIN KINASE KINASE KINASE 20-RELATED"/>
    <property type="match status" value="1"/>
</dbReference>
<dbReference type="PANTHER" id="PTHR43289:SF2">
    <property type="entry name" value="SERINE_THREONINE-PROTEIN KINASE NEK7"/>
    <property type="match status" value="1"/>
</dbReference>
<dbReference type="Pfam" id="PF00069">
    <property type="entry name" value="Pkinase"/>
    <property type="match status" value="1"/>
</dbReference>
<dbReference type="PIRSF" id="PIRSF000654">
    <property type="entry name" value="Integrin-linked_kinase"/>
    <property type="match status" value="1"/>
</dbReference>
<dbReference type="PRINTS" id="PR00109">
    <property type="entry name" value="TYRKINASE"/>
</dbReference>
<dbReference type="SMART" id="SM00220">
    <property type="entry name" value="S_TKc"/>
    <property type="match status" value="1"/>
</dbReference>
<dbReference type="SUPFAM" id="SSF56112">
    <property type="entry name" value="Protein kinase-like (PK-like)"/>
    <property type="match status" value="1"/>
</dbReference>
<dbReference type="PROSITE" id="PS00107">
    <property type="entry name" value="PROTEIN_KINASE_ATP"/>
    <property type="match status" value="1"/>
</dbReference>
<dbReference type="PROSITE" id="PS50011">
    <property type="entry name" value="PROTEIN_KINASE_DOM"/>
    <property type="match status" value="1"/>
</dbReference>
<dbReference type="PROSITE" id="PS00108">
    <property type="entry name" value="PROTEIN_KINASE_ST"/>
    <property type="match status" value="1"/>
</dbReference>
<feature type="chain" id="PRO_0000412823" description="Serine/threonine-protein kinase Nek7">
    <location>
        <begin position="1"/>
        <end position="302"/>
    </location>
</feature>
<feature type="domain" description="Protein kinase" evidence="4">
    <location>
        <begin position="34"/>
        <end position="299"/>
    </location>
</feature>
<feature type="region of interest" description="NTE motif" evidence="2">
    <location>
        <begin position="20"/>
        <end position="33"/>
    </location>
</feature>
<feature type="active site" description="Proton acceptor" evidence="4 5">
    <location>
        <position position="161"/>
    </location>
</feature>
<feature type="binding site" evidence="4">
    <location>
        <begin position="40"/>
        <end position="48"/>
    </location>
    <ligand>
        <name>ATP</name>
        <dbReference type="ChEBI" id="CHEBI:30616"/>
    </ligand>
</feature>
<feature type="binding site" evidence="4">
    <location>
        <position position="63"/>
    </location>
    <ligand>
        <name>ATP</name>
        <dbReference type="ChEBI" id="CHEBI:30616"/>
    </ligand>
</feature>
<feature type="site" description="Autoinhibitory" evidence="2">
    <location>
        <position position="97"/>
    </location>
</feature>
<feature type="modified residue" description="N-acetylmethionine" evidence="2">
    <location>
        <position position="1"/>
    </location>
</feature>
<feature type="modified residue" description="Phosphoserine; by NEK9" evidence="2">
    <location>
        <position position="195"/>
    </location>
</feature>
<proteinExistence type="evidence at protein level"/>
<comment type="function">
    <text evidence="2 6">Protein kinase which plays an important role in mitotic cell cycle progression (PubMed:11516946). Required for microtubule nucleation activity of the centrosome, robust mitotic spindle formation and cytokinesis (By similarity). Phosphorylates EML4 at 'Ser-146', promoting its dissociation from microtubules during mitosis which is required for efficient chromosome congression (By similarity). Phosphorylates RPS6KB1 (PubMed:11516946). Acts as an essential activator of the NLRP3 inflammasome assembly independently of its kinase activity (By similarity). Acts by unlocking NLRP3 following NLRP3 tranlocation into the microtubule organizing center (MTOC), relieving NLRP3 autoinhibition and promoting formation of the NLRP3:PYCARD complex, and activation of CASP1 (By similarity). Serves as a cellular switch that enforces mutual exclusivity of the inflammasome response and cell division: interaction with NEK9 prevents interaction with NLRP3 and activation of the inflammasome during mitosis (By similarity).</text>
</comment>
<comment type="catalytic activity">
    <reaction evidence="6">
        <text>L-seryl-[protein] + ATP = O-phospho-L-seryl-[protein] + ADP + H(+)</text>
        <dbReference type="Rhea" id="RHEA:17989"/>
        <dbReference type="Rhea" id="RHEA-COMP:9863"/>
        <dbReference type="Rhea" id="RHEA-COMP:11604"/>
        <dbReference type="ChEBI" id="CHEBI:15378"/>
        <dbReference type="ChEBI" id="CHEBI:29999"/>
        <dbReference type="ChEBI" id="CHEBI:30616"/>
        <dbReference type="ChEBI" id="CHEBI:83421"/>
        <dbReference type="ChEBI" id="CHEBI:456216"/>
        <dbReference type="EC" id="2.7.11.34"/>
    </reaction>
    <physiologicalReaction direction="left-to-right" evidence="2">
        <dbReference type="Rhea" id="RHEA:17990"/>
    </physiologicalReaction>
</comment>
<comment type="catalytic activity">
    <reaction evidence="6">
        <text>L-threonyl-[protein] + ATP = O-phospho-L-threonyl-[protein] + ADP + H(+)</text>
        <dbReference type="Rhea" id="RHEA:46608"/>
        <dbReference type="Rhea" id="RHEA-COMP:11060"/>
        <dbReference type="Rhea" id="RHEA-COMP:11605"/>
        <dbReference type="ChEBI" id="CHEBI:15378"/>
        <dbReference type="ChEBI" id="CHEBI:30013"/>
        <dbReference type="ChEBI" id="CHEBI:30616"/>
        <dbReference type="ChEBI" id="CHEBI:61977"/>
        <dbReference type="ChEBI" id="CHEBI:456216"/>
        <dbReference type="EC" id="2.7.11.34"/>
    </reaction>
    <physiologicalReaction direction="left-to-right" evidence="2">
        <dbReference type="Rhea" id="RHEA:46609"/>
    </physiologicalReaction>
</comment>
<comment type="cofactor">
    <cofactor evidence="1">
        <name>Mg(2+)</name>
        <dbReference type="ChEBI" id="CHEBI:18420"/>
    </cofactor>
</comment>
<comment type="activity regulation">
    <text evidence="2">Binding to NEK9 stimulates its activity by releasing the autoinhibitory function of Tyr-97.</text>
</comment>
<comment type="subunit">
    <text evidence="2 3">Monomer (By similarity). Interacts with NEK9; interaction takes place during mitosis; it relieves NEK7 autoinhibition and prevents interaction with NLRP3 (By similarity). Interacts with ANKS3; this interaction alters the subcellular distribution of NEK7 by preventing its nuclear translocation (By similarity). Interacts (via N-terminus) with NLRP3 (via LRR repeat domain); the interaction is required for the formation of the complex NLRP3:PYCARD, oligomerization of PYCARD and activation of CASP1 (By similarity).</text>
</comment>
<comment type="subcellular location">
    <subcellularLocation>
        <location evidence="2">Nucleus</location>
    </subcellularLocation>
    <subcellularLocation>
        <location evidence="2">Cytoplasm</location>
    </subcellularLocation>
    <subcellularLocation>
        <location evidence="2">Cytoplasm</location>
        <location evidence="2">Cytoskeleton</location>
        <location evidence="2">Spindle pole</location>
    </subcellularLocation>
    <subcellularLocation>
        <location evidence="2">Cytoplasm</location>
        <location evidence="2">Cytoskeleton</location>
        <location evidence="2">Microtubule organizing center</location>
        <location evidence="2">Centrosome</location>
    </subcellularLocation>
    <text evidence="2">Present at centrosome throughout the cell cycle. Also detected at spindle midzone of the anaphase cells and eventually concentrates at the midbody (By similarity). Interaction with ANKS3 prevents its translocation to the nucleus (By similarity).</text>
</comment>
<comment type="domain">
    <text evidence="2">Displays an autoinhibited conformation: Tyr-97 side chain points into the active site, interacts with the activation loop, and blocks the alphaC helix. The autoinhibitory conformation is released upon binding with NEK9.</text>
</comment>
<comment type="domain">
    <text evidence="2">The NTE (N-terminal extension) motif is a structural component of the catalytic domain and thus contributes to activity.</text>
</comment>
<comment type="PTM">
    <text evidence="2">Phosphorylation at Ser-195 required for its activation.</text>
</comment>
<comment type="similarity">
    <text evidence="8">Belongs to the protein kinase superfamily. NEK Ser/Thr protein kinase family. NIMA subfamily.</text>
</comment>
<organism>
    <name type="scientific">Rattus norvegicus</name>
    <name type="common">Rat</name>
    <dbReference type="NCBI Taxonomy" id="10116"/>
    <lineage>
        <taxon>Eukaryota</taxon>
        <taxon>Metazoa</taxon>
        <taxon>Chordata</taxon>
        <taxon>Craniata</taxon>
        <taxon>Vertebrata</taxon>
        <taxon>Euteleostomi</taxon>
        <taxon>Mammalia</taxon>
        <taxon>Eutheria</taxon>
        <taxon>Euarchontoglires</taxon>
        <taxon>Glires</taxon>
        <taxon>Rodentia</taxon>
        <taxon>Myomorpha</taxon>
        <taxon>Muroidea</taxon>
        <taxon>Muridae</taxon>
        <taxon>Murinae</taxon>
        <taxon>Rattus</taxon>
    </lineage>
</organism>
<evidence type="ECO:0000250" key="1">
    <source>
        <dbReference type="UniProtKB" id="Q8TD19"/>
    </source>
</evidence>
<evidence type="ECO:0000250" key="2">
    <source>
        <dbReference type="UniProtKB" id="Q8TDX7"/>
    </source>
</evidence>
<evidence type="ECO:0000250" key="3">
    <source>
        <dbReference type="UniProtKB" id="Q9ES74"/>
    </source>
</evidence>
<evidence type="ECO:0000255" key="4">
    <source>
        <dbReference type="PROSITE-ProRule" id="PRU00159"/>
    </source>
</evidence>
<evidence type="ECO:0000255" key="5">
    <source>
        <dbReference type="PROSITE-ProRule" id="PRU10027"/>
    </source>
</evidence>
<evidence type="ECO:0000269" key="6">
    <source>
    </source>
</evidence>
<evidence type="ECO:0000303" key="7">
    <source>
    </source>
</evidence>
<evidence type="ECO:0000305" key="8"/>
<evidence type="ECO:0000305" key="9">
    <source>
    </source>
</evidence>
<sequence length="302" mass="34529">MDEQPQGMQGPPVPQFQPQKALRPDMGYNTLANFRIEKKIGRGQFSEVYRASCLLDGVPVALKKVQIFDLMDAKARADCIKEIDLLKQLNHPNVIKYYASFIEDNELNIVLELADAGDLSRMIKHFKKQKRLIPERTVWKYFVQLCSALDHMHSRRVMHRDIKPANVFITATGVVKLGDLGLGRFFSSKTTAAHSLVGTPYYMSPERIHENGYNFKSDIWSLGCLLYEMAALQSPFYGDKMNLYSLCKKIEQCDYPPLPSDHYSEELRQLVNICINPDPEKRPDIAYVYDVAKRMHACTASS</sequence>
<reference key="1">
    <citation type="submission" date="2005-09" db="EMBL/GenBank/DDBJ databases">
        <authorList>
            <person name="Mural R.J."/>
            <person name="Adams M.D."/>
            <person name="Myers E.W."/>
            <person name="Smith H.O."/>
            <person name="Venter J.C."/>
        </authorList>
    </citation>
    <scope>NUCLEOTIDE SEQUENCE [LARGE SCALE GENOMIC DNA]</scope>
</reference>
<reference key="2">
    <citation type="journal article" date="2001" name="Curr. Biol.">
        <title>Identification of the NIMA family kinases NEK6/7 as regulators of the p70 ribosomal S6 kinase.</title>
        <authorList>
            <person name="Belham C."/>
            <person name="Comb M.J."/>
            <person name="Avruch J."/>
        </authorList>
    </citation>
    <scope>FUNCTION</scope>
    <scope>CATALYTIC ACTIVITY</scope>
</reference>